<protein>
    <recommendedName>
        <fullName>F-actin-capping protein subunit alpha-2</fullName>
    </recommendedName>
    <alternativeName>
        <fullName>Beta-actinin subunit I</fullName>
    </alternativeName>
    <alternativeName>
        <fullName>CapZ 36/32</fullName>
    </alternativeName>
</protein>
<feature type="chain" id="PRO_0000208635" description="F-actin-capping protein subunit alpha-2">
    <location>
        <begin position="1"/>
        <end position="286"/>
    </location>
</feature>
<dbReference type="EMBL" id="M80589">
    <property type="protein sequence ID" value="AAA48656.1"/>
    <property type="molecule type" value="mRNA"/>
</dbReference>
<dbReference type="PIR" id="S36093">
    <property type="entry name" value="S36093"/>
</dbReference>
<dbReference type="RefSeq" id="NP_001004380.1">
    <property type="nucleotide sequence ID" value="NM_001004380.2"/>
</dbReference>
<dbReference type="SMR" id="P28497"/>
<dbReference type="BioGRID" id="679070">
    <property type="interactions" value="2"/>
</dbReference>
<dbReference type="FunCoup" id="P28497">
    <property type="interactions" value="2565"/>
</dbReference>
<dbReference type="IntAct" id="P28497">
    <property type="interactions" value="2"/>
</dbReference>
<dbReference type="MINT" id="P28497"/>
<dbReference type="STRING" id="9031.ENSGALP00000056878"/>
<dbReference type="PaxDb" id="9031-ENSGALP00000015277"/>
<dbReference type="Ensembl" id="ENSGALT00010003473.1">
    <property type="protein sequence ID" value="ENSGALP00010001915.1"/>
    <property type="gene ID" value="ENSGALG00010001501.1"/>
</dbReference>
<dbReference type="GeneID" id="417771"/>
<dbReference type="KEGG" id="gga:417771"/>
<dbReference type="CTD" id="830"/>
<dbReference type="VEuPathDB" id="HostDB:geneid_417771"/>
<dbReference type="eggNOG" id="KOG0836">
    <property type="taxonomic scope" value="Eukaryota"/>
</dbReference>
<dbReference type="GeneTree" id="ENSGT00950000183119"/>
<dbReference type="HOGENOM" id="CLU_045161_0_0_1"/>
<dbReference type="InParanoid" id="P28497"/>
<dbReference type="OMA" id="VACIEDH"/>
<dbReference type="OrthoDB" id="340550at2759"/>
<dbReference type="PhylomeDB" id="P28497"/>
<dbReference type="TreeFam" id="TF314822"/>
<dbReference type="Reactome" id="R-GGA-3371497">
    <property type="pathway name" value="HSP90 chaperone cycle for steroid hormone receptors (SHR) in the presence of ligand"/>
</dbReference>
<dbReference type="Reactome" id="R-GGA-6807878">
    <property type="pathway name" value="COPI-mediated anterograde transport"/>
</dbReference>
<dbReference type="Reactome" id="R-GGA-6811436">
    <property type="pathway name" value="COPI-independent Golgi-to-ER retrograde traffic"/>
</dbReference>
<dbReference type="Reactome" id="R-GGA-879415">
    <property type="pathway name" value="Advanced glycosylation endproduct receptor signaling"/>
</dbReference>
<dbReference type="Reactome" id="R-GGA-983231">
    <property type="pathway name" value="Factors involved in megakaryocyte development and platelet production"/>
</dbReference>
<dbReference type="PRO" id="PR:P28497"/>
<dbReference type="Proteomes" id="UP000000539">
    <property type="component" value="Chromosome 1"/>
</dbReference>
<dbReference type="Bgee" id="ENSGALG00000043437">
    <property type="expression patterns" value="Expressed in muscle tissue and 14 other cell types or tissues"/>
</dbReference>
<dbReference type="GO" id="GO:0005903">
    <property type="term" value="C:brush border"/>
    <property type="evidence" value="ECO:0007669"/>
    <property type="project" value="Ensembl"/>
</dbReference>
<dbReference type="GO" id="GO:0030863">
    <property type="term" value="C:cortical cytoskeleton"/>
    <property type="evidence" value="ECO:0000318"/>
    <property type="project" value="GO_Central"/>
</dbReference>
<dbReference type="GO" id="GO:0005829">
    <property type="term" value="C:cytosol"/>
    <property type="evidence" value="ECO:0000304"/>
    <property type="project" value="Reactome"/>
</dbReference>
<dbReference type="GO" id="GO:0008290">
    <property type="term" value="C:F-actin capping protein complex"/>
    <property type="evidence" value="ECO:0000318"/>
    <property type="project" value="GO_Central"/>
</dbReference>
<dbReference type="GO" id="GO:0016020">
    <property type="term" value="C:membrane"/>
    <property type="evidence" value="ECO:0007669"/>
    <property type="project" value="Ensembl"/>
</dbReference>
<dbReference type="GO" id="GO:0030018">
    <property type="term" value="C:Z disc"/>
    <property type="evidence" value="ECO:0007669"/>
    <property type="project" value="UniProtKB-SubCell"/>
</dbReference>
<dbReference type="GO" id="GO:0051015">
    <property type="term" value="F:actin filament binding"/>
    <property type="evidence" value="ECO:0000318"/>
    <property type="project" value="GO_Central"/>
</dbReference>
<dbReference type="GO" id="GO:0030036">
    <property type="term" value="P:actin cytoskeleton organization"/>
    <property type="evidence" value="ECO:0000318"/>
    <property type="project" value="GO_Central"/>
</dbReference>
<dbReference type="GO" id="GO:0051016">
    <property type="term" value="P:barbed-end actin filament capping"/>
    <property type="evidence" value="ECO:0000318"/>
    <property type="project" value="GO_Central"/>
</dbReference>
<dbReference type="FunFam" id="3.30.1140.60:FF:000001">
    <property type="entry name" value="F-actin-capping protein subunit alpha"/>
    <property type="match status" value="1"/>
</dbReference>
<dbReference type="FunFam" id="3.90.1150.210:FF:000002">
    <property type="entry name" value="F-actin-capping protein subunit alpha"/>
    <property type="match status" value="1"/>
</dbReference>
<dbReference type="Gene3D" id="3.30.1140.60">
    <property type="entry name" value="F-actin capping protein, alpha subunit"/>
    <property type="match status" value="1"/>
</dbReference>
<dbReference type="Gene3D" id="3.90.1150.210">
    <property type="entry name" value="F-actin capping protein, beta subunit"/>
    <property type="match status" value="1"/>
</dbReference>
<dbReference type="InterPro" id="IPR002189">
    <property type="entry name" value="CapZ_alpha"/>
</dbReference>
<dbReference type="InterPro" id="IPR037282">
    <property type="entry name" value="CapZ_alpha/beta"/>
</dbReference>
<dbReference type="InterPro" id="IPR042276">
    <property type="entry name" value="CapZ_alpha/beta_2"/>
</dbReference>
<dbReference type="InterPro" id="IPR042489">
    <property type="entry name" value="CapZ_alpha_1"/>
</dbReference>
<dbReference type="InterPro" id="IPR017865">
    <property type="entry name" value="F-actin_cap_asu_CS"/>
</dbReference>
<dbReference type="PANTHER" id="PTHR10653">
    <property type="entry name" value="F-ACTIN-CAPPING PROTEIN SUBUNIT ALPHA"/>
    <property type="match status" value="1"/>
</dbReference>
<dbReference type="PANTHER" id="PTHR10653:SF2">
    <property type="entry name" value="F-ACTIN-CAPPING PROTEIN SUBUNIT ALPHA-2"/>
    <property type="match status" value="1"/>
</dbReference>
<dbReference type="Pfam" id="PF01267">
    <property type="entry name" value="F-actin_cap_A"/>
    <property type="match status" value="1"/>
</dbReference>
<dbReference type="PRINTS" id="PR00191">
    <property type="entry name" value="FACTINCAPA"/>
</dbReference>
<dbReference type="SUPFAM" id="SSF90096">
    <property type="entry name" value="Subunits of heterodimeric actin filament capping protein Capz"/>
    <property type="match status" value="1"/>
</dbReference>
<dbReference type="PROSITE" id="PS00748">
    <property type="entry name" value="F_ACTIN_CAPPING_A_1"/>
    <property type="match status" value="1"/>
</dbReference>
<dbReference type="PROSITE" id="PS00749">
    <property type="entry name" value="F_ACTIN_CAPPING_A_2"/>
    <property type="match status" value="1"/>
</dbReference>
<reference key="1">
    <citation type="journal article" date="1991" name="Cell Motil. Cytoskeleton">
        <title>Variant cDNAs encoding proteins similar to the alpha subunit of chicken CapZ.</title>
        <authorList>
            <person name="Cooper J.A."/>
            <person name="Caldwell J.E."/>
            <person name="Gattermeir D.J."/>
            <person name="Torres M.A."/>
            <person name="Amatruda J.F."/>
            <person name="Casella J.F."/>
        </authorList>
    </citation>
    <scope>NUCLEOTIDE SEQUENCE [MRNA]</scope>
    <scope>PARTIAL PROTEIN SEQUENCE</scope>
    <source>
        <tissue>Liver</tissue>
        <tissue>Muscle</tissue>
    </source>
</reference>
<comment type="function">
    <text>F-actin-capping proteins bind in a Ca(2+)-independent manner to the fast growing ends of actin filaments (barbed end) thereby blocking the exchange of subunits at these ends. Unlike other capping proteins (such as gelsolin and severin), these proteins do not sever actin filaments. CapZ may mediate the attachment of the barbed ends of actin filaments to the Z-line.</text>
</comment>
<comment type="subunit">
    <text evidence="1">Component of the F-actin capping complex, composed of a heterodimer of an alpha and a beta subunit. Component of the WASH complex (By similarity).</text>
</comment>
<comment type="subcellular location">
    <subcellularLocation>
        <location>Cytoplasm</location>
        <location>Myofibril</location>
        <location>Sarcomere</location>
        <location>Z line</location>
    </subcellularLocation>
    <text>CapZ is located at the Z line in chicken muscle.</text>
</comment>
<comment type="tissue specificity">
    <text>Present in all tissues examined.</text>
</comment>
<comment type="similarity">
    <text evidence="2">Belongs to the F-actin-capping protein alpha subunit family.</text>
</comment>
<proteinExistence type="evidence at protein level"/>
<keyword id="KW-0117">Actin capping</keyword>
<keyword id="KW-0009">Actin-binding</keyword>
<keyword id="KW-0963">Cytoplasm</keyword>
<keyword id="KW-0903">Direct protein sequencing</keyword>
<keyword id="KW-1185">Reference proteome</keyword>
<sequence length="286" mass="32845">MADLEEQLSDEEKVRIAAKFIIHAPPGEFNEVFNDVRLLLNNDNLLREGAAHAFAQYNLDQFTPVKIDGYDEQVLITEHGDLGNGKFLDPKNKISFKFDHLRKEATDPRPHEVENAIESWRNSVETAMKAYVKEHYPNGVCTVYGKTIDGQQTIIACIESHQFQAKNFWNGRWRSEWKFTISPSTTQVAGILKIQVHYYEDGNVQLVSHKDIQDSLTVSNEAQTAKEFIKIVEAAENEYQTAISENYQTMSDTTFKALRRQLPVTRTKIDWNKILSYKIGKEMQNA</sequence>
<name>CAZA2_CHICK</name>
<organism>
    <name type="scientific">Gallus gallus</name>
    <name type="common">Chicken</name>
    <dbReference type="NCBI Taxonomy" id="9031"/>
    <lineage>
        <taxon>Eukaryota</taxon>
        <taxon>Metazoa</taxon>
        <taxon>Chordata</taxon>
        <taxon>Craniata</taxon>
        <taxon>Vertebrata</taxon>
        <taxon>Euteleostomi</taxon>
        <taxon>Archelosauria</taxon>
        <taxon>Archosauria</taxon>
        <taxon>Dinosauria</taxon>
        <taxon>Saurischia</taxon>
        <taxon>Theropoda</taxon>
        <taxon>Coelurosauria</taxon>
        <taxon>Aves</taxon>
        <taxon>Neognathae</taxon>
        <taxon>Galloanserae</taxon>
        <taxon>Galliformes</taxon>
        <taxon>Phasianidae</taxon>
        <taxon>Phasianinae</taxon>
        <taxon>Gallus</taxon>
    </lineage>
</organism>
<evidence type="ECO:0000250" key="1"/>
<evidence type="ECO:0000305" key="2"/>
<accession>P28497</accession>
<gene>
    <name type="primary">CAPZA2</name>
</gene>